<dbReference type="EC" id="3.5.1.18" evidence="1"/>
<dbReference type="EMBL" id="CP000076">
    <property type="protein sequence ID" value="AAY90452.1"/>
    <property type="molecule type" value="Genomic_DNA"/>
</dbReference>
<dbReference type="RefSeq" id="WP_011059513.1">
    <property type="nucleotide sequence ID" value="NC_004129.6"/>
</dbReference>
<dbReference type="SMR" id="Q4KHI7"/>
<dbReference type="STRING" id="220664.PFL_1165"/>
<dbReference type="KEGG" id="pfl:PFL_1165"/>
<dbReference type="PATRIC" id="fig|220664.5.peg.1197"/>
<dbReference type="eggNOG" id="COG0624">
    <property type="taxonomic scope" value="Bacteria"/>
</dbReference>
<dbReference type="HOGENOM" id="CLU_021802_4_0_6"/>
<dbReference type="UniPathway" id="UPA00034">
    <property type="reaction ID" value="UER00021"/>
</dbReference>
<dbReference type="Proteomes" id="UP000008540">
    <property type="component" value="Chromosome"/>
</dbReference>
<dbReference type="GO" id="GO:0008777">
    <property type="term" value="F:acetylornithine deacetylase activity"/>
    <property type="evidence" value="ECO:0007669"/>
    <property type="project" value="TreeGrafter"/>
</dbReference>
<dbReference type="GO" id="GO:0050897">
    <property type="term" value="F:cobalt ion binding"/>
    <property type="evidence" value="ECO:0007669"/>
    <property type="project" value="UniProtKB-UniRule"/>
</dbReference>
<dbReference type="GO" id="GO:0009014">
    <property type="term" value="F:succinyl-diaminopimelate desuccinylase activity"/>
    <property type="evidence" value="ECO:0007669"/>
    <property type="project" value="UniProtKB-UniRule"/>
</dbReference>
<dbReference type="GO" id="GO:0008270">
    <property type="term" value="F:zinc ion binding"/>
    <property type="evidence" value="ECO:0007669"/>
    <property type="project" value="UniProtKB-UniRule"/>
</dbReference>
<dbReference type="GO" id="GO:0019877">
    <property type="term" value="P:diaminopimelate biosynthetic process"/>
    <property type="evidence" value="ECO:0007669"/>
    <property type="project" value="UniProtKB-UniRule"/>
</dbReference>
<dbReference type="GO" id="GO:0006526">
    <property type="term" value="P:L-arginine biosynthetic process"/>
    <property type="evidence" value="ECO:0007669"/>
    <property type="project" value="TreeGrafter"/>
</dbReference>
<dbReference type="GO" id="GO:0009089">
    <property type="term" value="P:lysine biosynthetic process via diaminopimelate"/>
    <property type="evidence" value="ECO:0007669"/>
    <property type="project" value="UniProtKB-UniRule"/>
</dbReference>
<dbReference type="CDD" id="cd03891">
    <property type="entry name" value="M20_DapE_proteobac"/>
    <property type="match status" value="1"/>
</dbReference>
<dbReference type="FunFam" id="3.30.70.360:FF:000011">
    <property type="entry name" value="Succinyl-diaminopimelate desuccinylase"/>
    <property type="match status" value="1"/>
</dbReference>
<dbReference type="FunFam" id="3.40.630.10:FF:000005">
    <property type="entry name" value="Succinyl-diaminopimelate desuccinylase"/>
    <property type="match status" value="1"/>
</dbReference>
<dbReference type="Gene3D" id="3.40.630.10">
    <property type="entry name" value="Zn peptidases"/>
    <property type="match status" value="2"/>
</dbReference>
<dbReference type="HAMAP" id="MF_01690">
    <property type="entry name" value="DapE"/>
    <property type="match status" value="1"/>
</dbReference>
<dbReference type="InterPro" id="IPR001261">
    <property type="entry name" value="ArgE/DapE_CS"/>
</dbReference>
<dbReference type="InterPro" id="IPR036264">
    <property type="entry name" value="Bact_exopeptidase_dim_dom"/>
</dbReference>
<dbReference type="InterPro" id="IPR005941">
    <property type="entry name" value="DapE_proteobac"/>
</dbReference>
<dbReference type="InterPro" id="IPR002933">
    <property type="entry name" value="Peptidase_M20"/>
</dbReference>
<dbReference type="InterPro" id="IPR011650">
    <property type="entry name" value="Peptidase_M20_dimer"/>
</dbReference>
<dbReference type="InterPro" id="IPR050072">
    <property type="entry name" value="Peptidase_M20A"/>
</dbReference>
<dbReference type="NCBIfam" id="TIGR01246">
    <property type="entry name" value="dapE_proteo"/>
    <property type="match status" value="1"/>
</dbReference>
<dbReference type="NCBIfam" id="NF009557">
    <property type="entry name" value="PRK13009.1"/>
    <property type="match status" value="1"/>
</dbReference>
<dbReference type="PANTHER" id="PTHR43808">
    <property type="entry name" value="ACETYLORNITHINE DEACETYLASE"/>
    <property type="match status" value="1"/>
</dbReference>
<dbReference type="PANTHER" id="PTHR43808:SF31">
    <property type="entry name" value="N-ACETYL-L-CITRULLINE DEACETYLASE"/>
    <property type="match status" value="1"/>
</dbReference>
<dbReference type="Pfam" id="PF07687">
    <property type="entry name" value="M20_dimer"/>
    <property type="match status" value="1"/>
</dbReference>
<dbReference type="Pfam" id="PF01546">
    <property type="entry name" value="Peptidase_M20"/>
    <property type="match status" value="1"/>
</dbReference>
<dbReference type="SUPFAM" id="SSF55031">
    <property type="entry name" value="Bacterial exopeptidase dimerisation domain"/>
    <property type="match status" value="1"/>
</dbReference>
<dbReference type="SUPFAM" id="SSF53187">
    <property type="entry name" value="Zn-dependent exopeptidases"/>
    <property type="match status" value="1"/>
</dbReference>
<dbReference type="PROSITE" id="PS00759">
    <property type="entry name" value="ARGE_DAPE_CPG2_2"/>
    <property type="match status" value="1"/>
</dbReference>
<proteinExistence type="inferred from homology"/>
<protein>
    <recommendedName>
        <fullName evidence="1">Succinyl-diaminopimelate desuccinylase</fullName>
        <shortName evidence="1">SDAP desuccinylase</shortName>
        <ecNumber evidence="1">3.5.1.18</ecNumber>
    </recommendedName>
    <alternativeName>
        <fullName evidence="1">N-succinyl-LL-2,6-diaminoheptanedioate amidohydrolase</fullName>
    </alternativeName>
</protein>
<gene>
    <name evidence="1" type="primary">dapE</name>
    <name type="ordered locus">PFL_1165</name>
</gene>
<accession>Q4KHI7</accession>
<reference key="1">
    <citation type="journal article" date="2005" name="Nat. Biotechnol.">
        <title>Complete genome sequence of the plant commensal Pseudomonas fluorescens Pf-5.</title>
        <authorList>
            <person name="Paulsen I.T."/>
            <person name="Press C.M."/>
            <person name="Ravel J."/>
            <person name="Kobayashi D.Y."/>
            <person name="Myers G.S.A."/>
            <person name="Mavrodi D.V."/>
            <person name="DeBoy R.T."/>
            <person name="Seshadri R."/>
            <person name="Ren Q."/>
            <person name="Madupu R."/>
            <person name="Dodson R.J."/>
            <person name="Durkin A.S."/>
            <person name="Brinkac L.M."/>
            <person name="Daugherty S.C."/>
            <person name="Sullivan S.A."/>
            <person name="Rosovitz M.J."/>
            <person name="Gwinn M.L."/>
            <person name="Zhou L."/>
            <person name="Schneider D.J."/>
            <person name="Cartinhour S.W."/>
            <person name="Nelson W.C."/>
            <person name="Weidman J."/>
            <person name="Watkins K."/>
            <person name="Tran K."/>
            <person name="Khouri H."/>
            <person name="Pierson E.A."/>
            <person name="Pierson L.S. III"/>
            <person name="Thomashow L.S."/>
            <person name="Loper J.E."/>
        </authorList>
    </citation>
    <scope>NUCLEOTIDE SEQUENCE [LARGE SCALE GENOMIC DNA]</scope>
    <source>
        <strain>ATCC BAA-477 / NRRL B-23932 / Pf-5</strain>
    </source>
</reference>
<keyword id="KW-0028">Amino-acid biosynthesis</keyword>
<keyword id="KW-0170">Cobalt</keyword>
<keyword id="KW-0220">Diaminopimelate biosynthesis</keyword>
<keyword id="KW-0378">Hydrolase</keyword>
<keyword id="KW-0457">Lysine biosynthesis</keyword>
<keyword id="KW-0479">Metal-binding</keyword>
<keyword id="KW-0862">Zinc</keyword>
<evidence type="ECO:0000255" key="1">
    <source>
        <dbReference type="HAMAP-Rule" id="MF_01690"/>
    </source>
</evidence>
<feature type="chain" id="PRO_0000375658" description="Succinyl-diaminopimelate desuccinylase">
    <location>
        <begin position="1"/>
        <end position="383"/>
    </location>
</feature>
<feature type="active site" evidence="1">
    <location>
        <position position="75"/>
    </location>
</feature>
<feature type="active site" description="Proton acceptor" evidence="1">
    <location>
        <position position="141"/>
    </location>
</feature>
<feature type="binding site" evidence="1">
    <location>
        <position position="73"/>
    </location>
    <ligand>
        <name>Zn(2+)</name>
        <dbReference type="ChEBI" id="CHEBI:29105"/>
        <label>1</label>
    </ligand>
</feature>
<feature type="binding site" evidence="1">
    <location>
        <position position="107"/>
    </location>
    <ligand>
        <name>Zn(2+)</name>
        <dbReference type="ChEBI" id="CHEBI:29105"/>
        <label>1</label>
    </ligand>
</feature>
<feature type="binding site" evidence="1">
    <location>
        <position position="107"/>
    </location>
    <ligand>
        <name>Zn(2+)</name>
        <dbReference type="ChEBI" id="CHEBI:29105"/>
        <label>2</label>
    </ligand>
</feature>
<feature type="binding site" evidence="1">
    <location>
        <position position="142"/>
    </location>
    <ligand>
        <name>Zn(2+)</name>
        <dbReference type="ChEBI" id="CHEBI:29105"/>
        <label>2</label>
    </ligand>
</feature>
<feature type="binding site" evidence="1">
    <location>
        <position position="170"/>
    </location>
    <ligand>
        <name>Zn(2+)</name>
        <dbReference type="ChEBI" id="CHEBI:29105"/>
        <label>1</label>
    </ligand>
</feature>
<feature type="binding site" evidence="1">
    <location>
        <position position="356"/>
    </location>
    <ligand>
        <name>Zn(2+)</name>
        <dbReference type="ChEBI" id="CHEBI:29105"/>
        <label>2</label>
    </ligand>
</feature>
<organism>
    <name type="scientific">Pseudomonas fluorescens (strain ATCC BAA-477 / NRRL B-23932 / Pf-5)</name>
    <dbReference type="NCBI Taxonomy" id="220664"/>
    <lineage>
        <taxon>Bacteria</taxon>
        <taxon>Pseudomonadati</taxon>
        <taxon>Pseudomonadota</taxon>
        <taxon>Gammaproteobacteria</taxon>
        <taxon>Pseudomonadales</taxon>
        <taxon>Pseudomonadaceae</taxon>
        <taxon>Pseudomonas</taxon>
    </lineage>
</organism>
<sequence>MTAHAELSPTLQLACDLIRRPSVTPIDADCQKLMMQRLGDAGFKLEPMRIEDVDNFWASHGQHEGPVLCFAGHTDVVPTGPVQAWQNDPFDALIDEHGMLCGRGAADMKGSLAAMLVAAERFVTDYPDHKGSVAFLITSDEEGPAHHGTKAVVERLAARKERLDWCIVGEPSSTSLVGDVVKNGRRGSLGAKLTVRGVQGHVAYPHLAKNPIHLAAPALAELAAEHWDDGNAFFPPTSFQISNLNSGTGATNVIPGDLVAVFNFRFSTESTVEGLQQRVAAILDKHGLDWHVEWALSGLPFLTEPGALLDAVSASIKQVTGRDTKASTSGGTSDGRFIATLGTQVVELGPVNATIHQVNERVLASDLDVLTEIYYQTLIKLLA</sequence>
<comment type="function">
    <text evidence="1">Catalyzes the hydrolysis of N-succinyl-L,L-diaminopimelic acid (SDAP), forming succinate and LL-2,6-diaminopimelate (DAP), an intermediate involved in the bacterial biosynthesis of lysine and meso-diaminopimelic acid, an essential component of bacterial cell walls.</text>
</comment>
<comment type="catalytic activity">
    <reaction evidence="1">
        <text>N-succinyl-(2S,6S)-2,6-diaminopimelate + H2O = (2S,6S)-2,6-diaminopimelate + succinate</text>
        <dbReference type="Rhea" id="RHEA:22608"/>
        <dbReference type="ChEBI" id="CHEBI:15377"/>
        <dbReference type="ChEBI" id="CHEBI:30031"/>
        <dbReference type="ChEBI" id="CHEBI:57609"/>
        <dbReference type="ChEBI" id="CHEBI:58087"/>
        <dbReference type="EC" id="3.5.1.18"/>
    </reaction>
</comment>
<comment type="cofactor">
    <cofactor evidence="1">
        <name>Zn(2+)</name>
        <dbReference type="ChEBI" id="CHEBI:29105"/>
    </cofactor>
    <cofactor evidence="1">
        <name>Co(2+)</name>
        <dbReference type="ChEBI" id="CHEBI:48828"/>
    </cofactor>
    <text evidence="1">Binds 2 Zn(2+) or Co(2+) ions per subunit.</text>
</comment>
<comment type="pathway">
    <text evidence="1">Amino-acid biosynthesis; L-lysine biosynthesis via DAP pathway; LL-2,6-diaminopimelate from (S)-tetrahydrodipicolinate (succinylase route): step 3/3.</text>
</comment>
<comment type="subunit">
    <text evidence="1">Homodimer.</text>
</comment>
<comment type="similarity">
    <text evidence="1">Belongs to the peptidase M20A family. DapE subfamily.</text>
</comment>
<name>DAPE_PSEF5</name>